<proteinExistence type="evidence at protein level"/>
<comment type="function">
    <text evidence="7">Scaffold subunit of the histone acetyltransferase (HAT) Enok complex which has histone H3 acetyltransferase activity (PubMed:27198229). As part of the Enok complex, associates with the Elg1 RFC-like complex and down-regulates its PCNA-unloading function to promote the G1/S transition (PubMed:27198229). May also play a role in maintaining the protein levels and stability of enok (PubMed:27198229).</text>
</comment>
<comment type="subunit">
    <text evidence="7">Component of the Enok complex composed of at least Br140, enok, Eaf6 and Ing5 (PubMed:27198229). As part of the Enok complex, interacts with elg1 and the Elg1 RFC-like complex (PubMed:27198229).</text>
</comment>
<comment type="subcellular location">
    <subcellularLocation>
        <location evidence="7">Nucleus</location>
    </subcellularLocation>
</comment>
<evidence type="ECO:0000255" key="1">
    <source>
        <dbReference type="PROSITE-ProRule" id="PRU00035"/>
    </source>
</evidence>
<evidence type="ECO:0000255" key="2">
    <source>
        <dbReference type="PROSITE-ProRule" id="PRU00042"/>
    </source>
</evidence>
<evidence type="ECO:0000255" key="3">
    <source>
        <dbReference type="PROSITE-ProRule" id="PRU00146"/>
    </source>
</evidence>
<evidence type="ECO:0000255" key="4">
    <source>
        <dbReference type="PROSITE-ProRule" id="PRU00162"/>
    </source>
</evidence>
<evidence type="ECO:0000255" key="5">
    <source>
        <dbReference type="PROSITE-ProRule" id="PRU01146"/>
    </source>
</evidence>
<evidence type="ECO:0000256" key="6">
    <source>
        <dbReference type="SAM" id="MobiDB-lite"/>
    </source>
</evidence>
<evidence type="ECO:0000269" key="7">
    <source>
    </source>
</evidence>
<evidence type="ECO:0000305" key="8"/>
<evidence type="ECO:0000312" key="9">
    <source>
        <dbReference type="EMBL" id="AAM50638.1"/>
    </source>
</evidence>
<evidence type="ECO:0000312" key="10">
    <source>
        <dbReference type="FlyBase" id="FBgn0033155"/>
    </source>
</evidence>
<evidence type="ECO:0000312" key="11">
    <source>
        <dbReference type="Proteomes" id="UP000000803"/>
    </source>
</evidence>
<feature type="chain" id="PRO_0000455977" description="Bromodomain-containing protein homolog">
    <location>
        <begin position="1"/>
        <end position="1430"/>
    </location>
</feature>
<feature type="domain" description="Bromo" evidence="1">
    <location>
        <begin position="611"/>
        <end position="715"/>
    </location>
</feature>
<feature type="domain" description="PWWP" evidence="4">
    <location>
        <begin position="1305"/>
        <end position="1378"/>
    </location>
</feature>
<feature type="zinc finger region" description="C2H2-type" evidence="2">
    <location>
        <begin position="23"/>
        <end position="49"/>
    </location>
</feature>
<feature type="zinc finger region" description="PHD-type 1" evidence="3">
    <location>
        <begin position="283"/>
        <end position="333"/>
    </location>
</feature>
<feature type="zinc finger region" description="C2HC pre-PHD-type" evidence="5">
    <location>
        <begin position="337"/>
        <end position="370"/>
    </location>
</feature>
<feature type="zinc finger region" description="PHD-type 2" evidence="5">
    <location>
        <begin position="394"/>
        <end position="457"/>
    </location>
</feature>
<feature type="region of interest" description="Disordered" evidence="6">
    <location>
        <begin position="51"/>
        <end position="111"/>
    </location>
</feature>
<feature type="region of interest" description="Disordered" evidence="6">
    <location>
        <begin position="796"/>
        <end position="887"/>
    </location>
</feature>
<feature type="region of interest" description="Disordered" evidence="6">
    <location>
        <begin position="901"/>
        <end position="942"/>
    </location>
</feature>
<feature type="region of interest" description="Disordered" evidence="6">
    <location>
        <begin position="1012"/>
        <end position="1054"/>
    </location>
</feature>
<feature type="region of interest" description="Disordered" evidence="6">
    <location>
        <begin position="1076"/>
        <end position="1301"/>
    </location>
</feature>
<feature type="compositionally biased region" description="Basic residues" evidence="6">
    <location>
        <begin position="62"/>
        <end position="81"/>
    </location>
</feature>
<feature type="compositionally biased region" description="Basic residues" evidence="6">
    <location>
        <begin position="796"/>
        <end position="805"/>
    </location>
</feature>
<feature type="compositionally biased region" description="Acidic residues" evidence="6">
    <location>
        <begin position="842"/>
        <end position="857"/>
    </location>
</feature>
<feature type="compositionally biased region" description="Polar residues" evidence="6">
    <location>
        <begin position="865"/>
        <end position="887"/>
    </location>
</feature>
<feature type="compositionally biased region" description="Low complexity" evidence="6">
    <location>
        <begin position="922"/>
        <end position="942"/>
    </location>
</feature>
<feature type="compositionally biased region" description="Low complexity" evidence="6">
    <location>
        <begin position="1034"/>
        <end position="1043"/>
    </location>
</feature>
<feature type="compositionally biased region" description="Low complexity" evidence="6">
    <location>
        <begin position="1085"/>
        <end position="1107"/>
    </location>
</feature>
<feature type="compositionally biased region" description="Acidic residues" evidence="6">
    <location>
        <begin position="1108"/>
        <end position="1120"/>
    </location>
</feature>
<feature type="compositionally biased region" description="Basic and acidic residues" evidence="6">
    <location>
        <begin position="1121"/>
        <end position="1137"/>
    </location>
</feature>
<feature type="compositionally biased region" description="Polar residues" evidence="6">
    <location>
        <begin position="1151"/>
        <end position="1165"/>
    </location>
</feature>
<feature type="compositionally biased region" description="Polar residues" evidence="6">
    <location>
        <begin position="1265"/>
        <end position="1278"/>
    </location>
</feature>
<feature type="compositionally biased region" description="Basic and acidic residues" evidence="6">
    <location>
        <begin position="1281"/>
        <end position="1293"/>
    </location>
</feature>
<feature type="binding site" evidence="3">
    <location>
        <position position="286"/>
    </location>
    <ligand>
        <name>Zn(2+)</name>
        <dbReference type="ChEBI" id="CHEBI:29105"/>
        <label>1</label>
    </ligand>
</feature>
<feature type="binding site" evidence="3">
    <location>
        <position position="289"/>
    </location>
    <ligand>
        <name>Zn(2+)</name>
        <dbReference type="ChEBI" id="CHEBI:29105"/>
        <label>1</label>
    </ligand>
</feature>
<feature type="binding site" evidence="3">
    <location>
        <position position="303"/>
    </location>
    <ligand>
        <name>Zn(2+)</name>
        <dbReference type="ChEBI" id="CHEBI:29105"/>
        <label>2</label>
    </ligand>
</feature>
<feature type="binding site" evidence="3">
    <location>
        <position position="306"/>
    </location>
    <ligand>
        <name>Zn(2+)</name>
        <dbReference type="ChEBI" id="CHEBI:29105"/>
        <label>2</label>
    </ligand>
</feature>
<feature type="binding site" evidence="3">
    <location>
        <position position="311"/>
    </location>
    <ligand>
        <name>Zn(2+)</name>
        <dbReference type="ChEBI" id="CHEBI:29105"/>
        <label>1</label>
    </ligand>
</feature>
<feature type="binding site" evidence="3">
    <location>
        <position position="314"/>
    </location>
    <ligand>
        <name>Zn(2+)</name>
        <dbReference type="ChEBI" id="CHEBI:29105"/>
        <label>1</label>
    </ligand>
</feature>
<feature type="binding site" evidence="3">
    <location>
        <position position="327"/>
    </location>
    <ligand>
        <name>Zn(2+)</name>
        <dbReference type="ChEBI" id="CHEBI:29105"/>
        <label>2</label>
    </ligand>
</feature>
<feature type="binding site" evidence="3">
    <location>
        <position position="330"/>
    </location>
    <ligand>
        <name>Zn(2+)</name>
        <dbReference type="ChEBI" id="CHEBI:29105"/>
        <label>2</label>
    </ligand>
</feature>
<dbReference type="EMBL" id="AE013599">
    <property type="protein sequence ID" value="AAF59276.1"/>
    <property type="molecule type" value="Genomic_DNA"/>
</dbReference>
<dbReference type="EMBL" id="AE013599">
    <property type="protein sequence ID" value="AHN55953.1"/>
    <property type="molecule type" value="Genomic_DNA"/>
</dbReference>
<dbReference type="EMBL" id="AY118778">
    <property type="protein sequence ID" value="AAM50638.1"/>
    <property type="molecule type" value="mRNA"/>
</dbReference>
<dbReference type="RefSeq" id="NP_001286155.1">
    <property type="nucleotide sequence ID" value="NM_001299226.1"/>
</dbReference>
<dbReference type="RefSeq" id="NP_610266.1">
    <property type="nucleotide sequence ID" value="NM_136422.3"/>
</dbReference>
<dbReference type="SMR" id="Q7JVP4"/>
<dbReference type="ComplexPortal" id="CPX-2442">
    <property type="entry name" value="Enok histone acetyltransferase complex"/>
</dbReference>
<dbReference type="FunCoup" id="Q7JVP4">
    <property type="interactions" value="623"/>
</dbReference>
<dbReference type="IntAct" id="Q7JVP4">
    <property type="interactions" value="5"/>
</dbReference>
<dbReference type="STRING" id="7227.FBpp0311524"/>
<dbReference type="GlyGen" id="Q7JVP4">
    <property type="glycosylation" value="2 sites"/>
</dbReference>
<dbReference type="PaxDb" id="7227-FBpp0088092"/>
<dbReference type="EnsemblMetazoa" id="FBtr0089021">
    <property type="protein sequence ID" value="FBpp0088092"/>
    <property type="gene ID" value="FBgn0033155"/>
</dbReference>
<dbReference type="EnsemblMetazoa" id="FBtr0345370">
    <property type="protein sequence ID" value="FBpp0311524"/>
    <property type="gene ID" value="FBgn0033155"/>
</dbReference>
<dbReference type="GeneID" id="35648"/>
<dbReference type="KEGG" id="dme:Dmel_CG1845"/>
<dbReference type="UCSC" id="CG1845-RA">
    <property type="organism name" value="d. melanogaster"/>
</dbReference>
<dbReference type="AGR" id="FB:FBgn0033155"/>
<dbReference type="CTD" id="35648"/>
<dbReference type="FlyBase" id="FBgn0033155">
    <property type="gene designation" value="Br140"/>
</dbReference>
<dbReference type="VEuPathDB" id="VectorBase:FBgn0033155"/>
<dbReference type="eggNOG" id="KOG0955">
    <property type="taxonomic scope" value="Eukaryota"/>
</dbReference>
<dbReference type="GeneTree" id="ENSGT00940000169333"/>
<dbReference type="HOGENOM" id="CLU_003589_1_0_1"/>
<dbReference type="InParanoid" id="Q7JVP4"/>
<dbReference type="OMA" id="PDYMDIV"/>
<dbReference type="OrthoDB" id="20839at2759"/>
<dbReference type="Reactome" id="R-DME-114608">
    <property type="pathway name" value="Platelet degranulation"/>
</dbReference>
<dbReference type="Reactome" id="R-DME-6804758">
    <property type="pathway name" value="Regulation of TP53 Activity through Acetylation"/>
</dbReference>
<dbReference type="BioGRID-ORCS" id="35648">
    <property type="hits" value="1 hit in 3 CRISPR screens"/>
</dbReference>
<dbReference type="GenomeRNAi" id="35648"/>
<dbReference type="PRO" id="PR:Q7JVP4"/>
<dbReference type="Proteomes" id="UP000000803">
    <property type="component" value="Chromosome 2R"/>
</dbReference>
<dbReference type="Bgee" id="FBgn0033155">
    <property type="expression patterns" value="Expressed in cleaving embryo and 43 other cell types or tissues"/>
</dbReference>
<dbReference type="GO" id="GO:0070776">
    <property type="term" value="C:MOZ/MORF histone acetyltransferase complex"/>
    <property type="evidence" value="ECO:0000314"/>
    <property type="project" value="FlyBase"/>
</dbReference>
<dbReference type="GO" id="GO:0005634">
    <property type="term" value="C:nucleus"/>
    <property type="evidence" value="ECO:0007669"/>
    <property type="project" value="UniProtKB-SubCell"/>
</dbReference>
<dbReference type="GO" id="GO:0010698">
    <property type="term" value="F:acetyltransferase activator activity"/>
    <property type="evidence" value="ECO:0000314"/>
    <property type="project" value="FlyBase"/>
</dbReference>
<dbReference type="GO" id="GO:0008270">
    <property type="term" value="F:zinc ion binding"/>
    <property type="evidence" value="ECO:0007669"/>
    <property type="project" value="UniProtKB-KW"/>
</dbReference>
<dbReference type="GO" id="GO:0006357">
    <property type="term" value="P:regulation of transcription by RNA polymerase II"/>
    <property type="evidence" value="ECO:0000318"/>
    <property type="project" value="GO_Central"/>
</dbReference>
<dbReference type="CDD" id="cd05512">
    <property type="entry name" value="Bromo_brd1_like"/>
    <property type="match status" value="1"/>
</dbReference>
<dbReference type="CDD" id="cd15670">
    <property type="entry name" value="ePHD_BRPF"/>
    <property type="match status" value="1"/>
</dbReference>
<dbReference type="CDD" id="cd15572">
    <property type="entry name" value="PHD_BRPF"/>
    <property type="match status" value="1"/>
</dbReference>
<dbReference type="CDD" id="cd05839">
    <property type="entry name" value="PWWP_BRPF"/>
    <property type="match status" value="1"/>
</dbReference>
<dbReference type="FunFam" id="3.30.40.10:FF:000008">
    <property type="entry name" value="Bromodomain containing 1, isoform CRA_a"/>
    <property type="match status" value="1"/>
</dbReference>
<dbReference type="FunFam" id="2.30.30.140:FF:000008">
    <property type="entry name" value="Bromodomain containing 1, isoform CRA_b"/>
    <property type="match status" value="1"/>
</dbReference>
<dbReference type="FunFam" id="3.30.40.10:FF:000007">
    <property type="entry name" value="Bromodomain containing 1, isoform CRA_b"/>
    <property type="match status" value="1"/>
</dbReference>
<dbReference type="Gene3D" id="2.30.30.140">
    <property type="match status" value="1"/>
</dbReference>
<dbReference type="Gene3D" id="1.20.920.10">
    <property type="entry name" value="Bromodomain-like"/>
    <property type="match status" value="1"/>
</dbReference>
<dbReference type="Gene3D" id="3.30.40.10">
    <property type="entry name" value="Zinc/RING finger domain, C3HC4 (zinc finger)"/>
    <property type="match status" value="2"/>
</dbReference>
<dbReference type="InterPro" id="IPR001487">
    <property type="entry name" value="Bromodomain"/>
</dbReference>
<dbReference type="InterPro" id="IPR036427">
    <property type="entry name" value="Bromodomain-like_sf"/>
</dbReference>
<dbReference type="InterPro" id="IPR019542">
    <property type="entry name" value="Enhancer_polycomb-like_N"/>
</dbReference>
<dbReference type="InterPro" id="IPR034732">
    <property type="entry name" value="EPHD"/>
</dbReference>
<dbReference type="InterPro" id="IPR050701">
    <property type="entry name" value="Histone_Mod_Regulator"/>
</dbReference>
<dbReference type="InterPro" id="IPR000313">
    <property type="entry name" value="PWWP_dom"/>
</dbReference>
<dbReference type="InterPro" id="IPR019786">
    <property type="entry name" value="Zinc_finger_PHD-type_CS"/>
</dbReference>
<dbReference type="InterPro" id="IPR013087">
    <property type="entry name" value="Znf_C2H2_type"/>
</dbReference>
<dbReference type="InterPro" id="IPR011011">
    <property type="entry name" value="Znf_FYVE_PHD"/>
</dbReference>
<dbReference type="InterPro" id="IPR001965">
    <property type="entry name" value="Znf_PHD"/>
</dbReference>
<dbReference type="InterPro" id="IPR019787">
    <property type="entry name" value="Znf_PHD-finger"/>
</dbReference>
<dbReference type="InterPro" id="IPR013083">
    <property type="entry name" value="Znf_RING/FYVE/PHD"/>
</dbReference>
<dbReference type="PANTHER" id="PTHR13793:SF107">
    <property type="entry name" value="BROMODOMAIN-CONTAINING PROTEIN HOMOLOG"/>
    <property type="match status" value="1"/>
</dbReference>
<dbReference type="PANTHER" id="PTHR13793">
    <property type="entry name" value="PHD FINGER PROTEINS"/>
    <property type="match status" value="1"/>
</dbReference>
<dbReference type="Pfam" id="PF00439">
    <property type="entry name" value="Bromodomain"/>
    <property type="match status" value="1"/>
</dbReference>
<dbReference type="Pfam" id="PF10513">
    <property type="entry name" value="EPL1"/>
    <property type="match status" value="1"/>
</dbReference>
<dbReference type="Pfam" id="PF13831">
    <property type="entry name" value="PHD_2"/>
    <property type="match status" value="1"/>
</dbReference>
<dbReference type="Pfam" id="PF00855">
    <property type="entry name" value="PWWP"/>
    <property type="match status" value="1"/>
</dbReference>
<dbReference type="Pfam" id="PF13832">
    <property type="entry name" value="zf-HC5HC2H_2"/>
    <property type="match status" value="1"/>
</dbReference>
<dbReference type="PRINTS" id="PR00503">
    <property type="entry name" value="BROMODOMAIN"/>
</dbReference>
<dbReference type="SMART" id="SM00297">
    <property type="entry name" value="BROMO"/>
    <property type="match status" value="1"/>
</dbReference>
<dbReference type="SMART" id="SM00249">
    <property type="entry name" value="PHD"/>
    <property type="match status" value="2"/>
</dbReference>
<dbReference type="SMART" id="SM00293">
    <property type="entry name" value="PWWP"/>
    <property type="match status" value="1"/>
</dbReference>
<dbReference type="SUPFAM" id="SSF47370">
    <property type="entry name" value="Bromodomain"/>
    <property type="match status" value="1"/>
</dbReference>
<dbReference type="SUPFAM" id="SSF57903">
    <property type="entry name" value="FYVE/PHD zinc finger"/>
    <property type="match status" value="1"/>
</dbReference>
<dbReference type="SUPFAM" id="SSF63748">
    <property type="entry name" value="Tudor/PWWP/MBT"/>
    <property type="match status" value="1"/>
</dbReference>
<dbReference type="PROSITE" id="PS50014">
    <property type="entry name" value="BROMODOMAIN_2"/>
    <property type="match status" value="1"/>
</dbReference>
<dbReference type="PROSITE" id="PS51805">
    <property type="entry name" value="EPHD"/>
    <property type="match status" value="1"/>
</dbReference>
<dbReference type="PROSITE" id="PS50812">
    <property type="entry name" value="PWWP"/>
    <property type="match status" value="1"/>
</dbReference>
<dbReference type="PROSITE" id="PS01359">
    <property type="entry name" value="ZF_PHD_1"/>
    <property type="match status" value="1"/>
</dbReference>
<dbReference type="PROSITE" id="PS50016">
    <property type="entry name" value="ZF_PHD_2"/>
    <property type="match status" value="1"/>
</dbReference>
<dbReference type="PROSITE" id="PS00028">
    <property type="entry name" value="ZINC_FINGER_C2H2_1"/>
    <property type="match status" value="1"/>
</dbReference>
<dbReference type="PROSITE" id="PS50157">
    <property type="entry name" value="ZINC_FINGER_C2H2_2"/>
    <property type="match status" value="1"/>
</dbReference>
<name>BRDH_DROME</name>
<keyword id="KW-0103">Bromodomain</keyword>
<keyword id="KW-0479">Metal-binding</keyword>
<keyword id="KW-0539">Nucleus</keyword>
<keyword id="KW-1185">Reference proteome</keyword>
<keyword id="KW-0677">Repeat</keyword>
<keyword id="KW-0862">Zinc</keyword>
<keyword id="KW-0863">Zinc-finger</keyword>
<reference evidence="11" key="1">
    <citation type="journal article" date="2000" name="Science">
        <title>The genome sequence of Drosophila melanogaster.</title>
        <authorList>
            <person name="Adams M.D."/>
            <person name="Celniker S.E."/>
            <person name="Holt R.A."/>
            <person name="Evans C.A."/>
            <person name="Gocayne J.D."/>
            <person name="Amanatides P.G."/>
            <person name="Scherer S.E."/>
            <person name="Li P.W."/>
            <person name="Hoskins R.A."/>
            <person name="Galle R.F."/>
            <person name="George R.A."/>
            <person name="Lewis S.E."/>
            <person name="Richards S."/>
            <person name="Ashburner M."/>
            <person name="Henderson S.N."/>
            <person name="Sutton G.G."/>
            <person name="Wortman J.R."/>
            <person name="Yandell M.D."/>
            <person name="Zhang Q."/>
            <person name="Chen L.X."/>
            <person name="Brandon R.C."/>
            <person name="Rogers Y.-H.C."/>
            <person name="Blazej R.G."/>
            <person name="Champe M."/>
            <person name="Pfeiffer B.D."/>
            <person name="Wan K.H."/>
            <person name="Doyle C."/>
            <person name="Baxter E.G."/>
            <person name="Helt G."/>
            <person name="Nelson C.R."/>
            <person name="Miklos G.L.G."/>
            <person name="Abril J.F."/>
            <person name="Agbayani A."/>
            <person name="An H.-J."/>
            <person name="Andrews-Pfannkoch C."/>
            <person name="Baldwin D."/>
            <person name="Ballew R.M."/>
            <person name="Basu A."/>
            <person name="Baxendale J."/>
            <person name="Bayraktaroglu L."/>
            <person name="Beasley E.M."/>
            <person name="Beeson K.Y."/>
            <person name="Benos P.V."/>
            <person name="Berman B.P."/>
            <person name="Bhandari D."/>
            <person name="Bolshakov S."/>
            <person name="Borkova D."/>
            <person name="Botchan M.R."/>
            <person name="Bouck J."/>
            <person name="Brokstein P."/>
            <person name="Brottier P."/>
            <person name="Burtis K.C."/>
            <person name="Busam D.A."/>
            <person name="Butler H."/>
            <person name="Cadieu E."/>
            <person name="Center A."/>
            <person name="Chandra I."/>
            <person name="Cherry J.M."/>
            <person name="Cawley S."/>
            <person name="Dahlke C."/>
            <person name="Davenport L.B."/>
            <person name="Davies P."/>
            <person name="de Pablos B."/>
            <person name="Delcher A."/>
            <person name="Deng Z."/>
            <person name="Mays A.D."/>
            <person name="Dew I."/>
            <person name="Dietz S.M."/>
            <person name="Dodson K."/>
            <person name="Doup L.E."/>
            <person name="Downes M."/>
            <person name="Dugan-Rocha S."/>
            <person name="Dunkov B.C."/>
            <person name="Dunn P."/>
            <person name="Durbin K.J."/>
            <person name="Evangelista C.C."/>
            <person name="Ferraz C."/>
            <person name="Ferriera S."/>
            <person name="Fleischmann W."/>
            <person name="Fosler C."/>
            <person name="Gabrielian A.E."/>
            <person name="Garg N.S."/>
            <person name="Gelbart W.M."/>
            <person name="Glasser K."/>
            <person name="Glodek A."/>
            <person name="Gong F."/>
            <person name="Gorrell J.H."/>
            <person name="Gu Z."/>
            <person name="Guan P."/>
            <person name="Harris M."/>
            <person name="Harris N.L."/>
            <person name="Harvey D.A."/>
            <person name="Heiman T.J."/>
            <person name="Hernandez J.R."/>
            <person name="Houck J."/>
            <person name="Hostin D."/>
            <person name="Houston K.A."/>
            <person name="Howland T.J."/>
            <person name="Wei M.-H."/>
            <person name="Ibegwam C."/>
            <person name="Jalali M."/>
            <person name="Kalush F."/>
            <person name="Karpen G.H."/>
            <person name="Ke Z."/>
            <person name="Kennison J.A."/>
            <person name="Ketchum K.A."/>
            <person name="Kimmel B.E."/>
            <person name="Kodira C.D."/>
            <person name="Kraft C.L."/>
            <person name="Kravitz S."/>
            <person name="Kulp D."/>
            <person name="Lai Z."/>
            <person name="Lasko P."/>
            <person name="Lei Y."/>
            <person name="Levitsky A.A."/>
            <person name="Li J.H."/>
            <person name="Li Z."/>
            <person name="Liang Y."/>
            <person name="Lin X."/>
            <person name="Liu X."/>
            <person name="Mattei B."/>
            <person name="McIntosh T.C."/>
            <person name="McLeod M.P."/>
            <person name="McPherson D."/>
            <person name="Merkulov G."/>
            <person name="Milshina N.V."/>
            <person name="Mobarry C."/>
            <person name="Morris J."/>
            <person name="Moshrefi A."/>
            <person name="Mount S.M."/>
            <person name="Moy M."/>
            <person name="Murphy B."/>
            <person name="Murphy L."/>
            <person name="Muzny D.M."/>
            <person name="Nelson D.L."/>
            <person name="Nelson D.R."/>
            <person name="Nelson K.A."/>
            <person name="Nixon K."/>
            <person name="Nusskern D.R."/>
            <person name="Pacleb J.M."/>
            <person name="Palazzolo M."/>
            <person name="Pittman G.S."/>
            <person name="Pan S."/>
            <person name="Pollard J."/>
            <person name="Puri V."/>
            <person name="Reese M.G."/>
            <person name="Reinert K."/>
            <person name="Remington K."/>
            <person name="Saunders R.D.C."/>
            <person name="Scheeler F."/>
            <person name="Shen H."/>
            <person name="Shue B.C."/>
            <person name="Siden-Kiamos I."/>
            <person name="Simpson M."/>
            <person name="Skupski M.P."/>
            <person name="Smith T.J."/>
            <person name="Spier E."/>
            <person name="Spradling A.C."/>
            <person name="Stapleton M."/>
            <person name="Strong R."/>
            <person name="Sun E."/>
            <person name="Svirskas R."/>
            <person name="Tector C."/>
            <person name="Turner R."/>
            <person name="Venter E."/>
            <person name="Wang A.H."/>
            <person name="Wang X."/>
            <person name="Wang Z.-Y."/>
            <person name="Wassarman D.A."/>
            <person name="Weinstock G.M."/>
            <person name="Weissenbach J."/>
            <person name="Williams S.M."/>
            <person name="Woodage T."/>
            <person name="Worley K.C."/>
            <person name="Wu D."/>
            <person name="Yang S."/>
            <person name="Yao Q.A."/>
            <person name="Ye J."/>
            <person name="Yeh R.-F."/>
            <person name="Zaveri J.S."/>
            <person name="Zhan M."/>
            <person name="Zhang G."/>
            <person name="Zhao Q."/>
            <person name="Zheng L."/>
            <person name="Zheng X.H."/>
            <person name="Zhong F.N."/>
            <person name="Zhong W."/>
            <person name="Zhou X."/>
            <person name="Zhu S.C."/>
            <person name="Zhu X."/>
            <person name="Smith H.O."/>
            <person name="Gibbs R.A."/>
            <person name="Myers E.W."/>
            <person name="Rubin G.M."/>
            <person name="Venter J.C."/>
        </authorList>
    </citation>
    <scope>NUCLEOTIDE SEQUENCE [LARGE SCALE GENOMIC DNA]</scope>
    <source>
        <strain evidence="11">Berkeley</strain>
    </source>
</reference>
<reference evidence="11" key="2">
    <citation type="journal article" date="2002" name="Genome Biol.">
        <title>Annotation of the Drosophila melanogaster euchromatic genome: a systematic review.</title>
        <authorList>
            <person name="Misra S."/>
            <person name="Crosby M.A."/>
            <person name="Mungall C.J."/>
            <person name="Matthews B.B."/>
            <person name="Campbell K.S."/>
            <person name="Hradecky P."/>
            <person name="Huang Y."/>
            <person name="Kaminker J.S."/>
            <person name="Millburn G.H."/>
            <person name="Prochnik S.E."/>
            <person name="Smith C.D."/>
            <person name="Tupy J.L."/>
            <person name="Whitfield E.J."/>
            <person name="Bayraktaroglu L."/>
            <person name="Berman B.P."/>
            <person name="Bettencourt B.R."/>
            <person name="Celniker S.E."/>
            <person name="de Grey A.D.N.J."/>
            <person name="Drysdale R.A."/>
            <person name="Harris N.L."/>
            <person name="Richter J."/>
            <person name="Russo S."/>
            <person name="Schroeder A.J."/>
            <person name="Shu S.Q."/>
            <person name="Stapleton M."/>
            <person name="Yamada C."/>
            <person name="Ashburner M."/>
            <person name="Gelbart W.M."/>
            <person name="Rubin G.M."/>
            <person name="Lewis S.E."/>
        </authorList>
    </citation>
    <scope>GENOME REANNOTATION</scope>
    <source>
        <strain evidence="11">Berkeley</strain>
    </source>
</reference>
<reference evidence="9" key="3">
    <citation type="journal article" date="2002" name="Genome Biol.">
        <title>A Drosophila full-length cDNA resource.</title>
        <authorList>
            <person name="Stapleton M."/>
            <person name="Carlson J.W."/>
            <person name="Brokstein P."/>
            <person name="Yu C."/>
            <person name="Champe M."/>
            <person name="George R.A."/>
            <person name="Guarin H."/>
            <person name="Kronmiller B."/>
            <person name="Pacleb J.M."/>
            <person name="Park S."/>
            <person name="Wan K.H."/>
            <person name="Rubin G.M."/>
            <person name="Celniker S.E."/>
        </authorList>
    </citation>
    <scope>NUCLEOTIDE SEQUENCE [LARGE SCALE MRNA]</scope>
    <source>
        <strain evidence="9">Berkeley</strain>
        <tissue evidence="9">Head</tissue>
    </source>
</reference>
<reference evidence="8" key="4">
    <citation type="journal article" date="2016" name="Genes Dev.">
        <title>The Enok acetyltransferase complex interacts with Elg1 and negatively regulates PCNA unloading to promote the G1/S transition.</title>
        <authorList>
            <person name="Huang F."/>
            <person name="Saraf A."/>
            <person name="Florens L."/>
            <person name="Kusch T."/>
            <person name="Swanson S.K."/>
            <person name="Szerszen L.T."/>
            <person name="Li G."/>
            <person name="Dutta A."/>
            <person name="Washburn M.P."/>
            <person name="Abmayr S.M."/>
            <person name="Workman J.L."/>
        </authorList>
    </citation>
    <scope>FUNCTION</scope>
    <scope>IDENTIFICATION IN THE ENOK COMPLEX</scope>
    <scope>INTERACTION WITH ELG1</scope>
    <scope>SUBCELLULAR LOCATION</scope>
</reference>
<organism evidence="11">
    <name type="scientific">Drosophila melanogaster</name>
    <name type="common">Fruit fly</name>
    <dbReference type="NCBI Taxonomy" id="7227"/>
    <lineage>
        <taxon>Eukaryota</taxon>
        <taxon>Metazoa</taxon>
        <taxon>Ecdysozoa</taxon>
        <taxon>Arthropoda</taxon>
        <taxon>Hexapoda</taxon>
        <taxon>Insecta</taxon>
        <taxon>Pterygota</taxon>
        <taxon>Neoptera</taxon>
        <taxon>Endopterygota</taxon>
        <taxon>Diptera</taxon>
        <taxon>Brachycera</taxon>
        <taxon>Muscomorpha</taxon>
        <taxon>Ephydroidea</taxon>
        <taxon>Drosophilidae</taxon>
        <taxon>Drosophila</taxon>
        <taxon>Sophophora</taxon>
    </lineage>
</organism>
<protein>
    <recommendedName>
        <fullName evidence="8">Bromodomain-containing protein homolog</fullName>
    </recommendedName>
    <alternativeName>
        <fullName evidence="8">Protein Br140</fullName>
    </alternativeName>
</protein>
<sequence length="1430" mass="157119">MGLDFDAVEYCKGVKTQQSQPPFACPVRGCDRSYKTIMGLQYHLMKYDHDNPQPLTPVLTPSRKKARSRSGGHHSTPRPHKDHPTPGGGGAEARNGCSSASAGGGSASGVSARQYANPESLVSYNEEEATVTFNLDGKSVRLGIDDALPLVEDEEFAALVARGCILNADAPPLEENAPWARVQVPVARVAEIPDYRVSDAPPRPLAYYRFIEKSLEELDGEVEYDVDEEDSAWLEHMNEERQRLGLNAVGIDTMELLMDRLEKESHFQAAANGTPTGVEVDDDAVCCICLDGECQNTNVILFCDMCNLAVHQDCYGVPYIPEGQWLCRRCLQSPSKPVNCVLCPNAGGAFKQTDHGQWAHVVCALWIPEVRFANTVFLEPIDSIETIPPARWRLTCYVCKEKGLGACIQCHRNSCYAAFHVTCAQQAGLYMTMDTVKDGHNDSSMHVQKFAYCHAHTPADAKLKMNVPDFEDTRHKMKEARKALAKKRSTAPVVLIPTIPPDRVQEIATMVTMQRKKEFLDRIIAYWTLKRHYRNGVPLLRRLQSQGNNHGVIQRNGIEGSPDTGELYRQLKYWQCLRQDLERARLLCELVRKREKLKVAFVRISEEVVMLQLNPLEAALNKLLDALEARDSMQIFREPVDTSEVPDYTDIVKQPMDLGTMRAKLKECQYNSLEQLEADFDLMIQNCLAYNNKDTVFYRAGIRMRDQAAPLFVQVRKELQRDGLLARSQRYHVDHVEAEVEQELRLLLAAPASEGIVQKLLILADKSQVLKNPTYRTKKIKQIRLEISRMRKSLQKARFAARHSSHANQSQSDDEDTLGGSPSKKRTRKRFNSSGVDMELGHDDDDEEEDSDEDSMGEDTVSKDLLNSTQTPPCSPIKSLNNSSSPVGINRRTAILLTRKAQAALKRPSEPLTTPVKEEQHNSQSSNTQSTSGSSSSVTTAATAASSGAGTLNHVLSSAPPTASSFALTQNNSSGGGALASGTGIGGSSSAGTAAAASLTSTALAMNSKLSANLPVKSPKRPGRYRRVPEVRHSSSMSPKKSPNPAVTVSQALPMPETLPFERIPDSFRVYRANNQRDVSDSDDAPSQSSSPCSSCSDFSMSGSCSDFDSDEASEGDADGDPDRDGGRSRSEERDSTSQEGTTDAMDMQHASLNNVQGNNGNMAISSSSGGSGGSSSEDDELEERPLSARQNKPMKVGTRGTPTPTTMARAVALSAGRGRGKRRSNLSESTSSTATPPPLRRAGKLRSATPNASPLVNNIKARRNTTAAGSAPLTNNNRSKHSEDSASSERHNNHSHGQKPALEPLQLVWAKCRGYPWYPALILDPKTPKGFVYNGVPLPAPPTDVLALRKNCLDEIVFLVLFFDVKRTWQWLPANKLDILGIDKQLDQQKLVESRKPAERKAVKKAYQDALHYQSQVSDLEGQGPDPIM</sequence>
<accession>Q7JVP4</accession>
<gene>
    <name evidence="10" type="primary">Br140</name>
    <name evidence="10" type="ORF">CG1845</name>
</gene>